<protein>
    <recommendedName>
        <fullName evidence="1">Ubiquinone biosynthesis O-methyltransferase</fullName>
    </recommendedName>
    <alternativeName>
        <fullName evidence="1">2-polyprenyl-6-hydroxyphenol methylase</fullName>
        <ecNumber evidence="1">2.1.1.222</ecNumber>
    </alternativeName>
    <alternativeName>
        <fullName evidence="1">3-demethylubiquinone 3-O-methyltransferase</fullName>
        <ecNumber evidence="1">2.1.1.64</ecNumber>
    </alternativeName>
</protein>
<feature type="chain" id="PRO_1000199691" description="Ubiquinone biosynthesis O-methyltransferase">
    <location>
        <begin position="1"/>
        <end position="232"/>
    </location>
</feature>
<feature type="binding site" evidence="1">
    <location>
        <position position="36"/>
    </location>
    <ligand>
        <name>S-adenosyl-L-methionine</name>
        <dbReference type="ChEBI" id="CHEBI:59789"/>
    </ligand>
</feature>
<feature type="binding site" evidence="1">
    <location>
        <position position="55"/>
    </location>
    <ligand>
        <name>S-adenosyl-L-methionine</name>
        <dbReference type="ChEBI" id="CHEBI:59789"/>
    </ligand>
</feature>
<feature type="binding site" evidence="1">
    <location>
        <position position="76"/>
    </location>
    <ligand>
        <name>S-adenosyl-L-methionine</name>
        <dbReference type="ChEBI" id="CHEBI:59789"/>
    </ligand>
</feature>
<feature type="binding site" evidence="1">
    <location>
        <position position="120"/>
    </location>
    <ligand>
        <name>S-adenosyl-L-methionine</name>
        <dbReference type="ChEBI" id="CHEBI:59789"/>
    </ligand>
</feature>
<organism>
    <name type="scientific">Pseudomonas putida (strain W619)</name>
    <dbReference type="NCBI Taxonomy" id="390235"/>
    <lineage>
        <taxon>Bacteria</taxon>
        <taxon>Pseudomonadati</taxon>
        <taxon>Pseudomonadota</taxon>
        <taxon>Gammaproteobacteria</taxon>
        <taxon>Pseudomonadales</taxon>
        <taxon>Pseudomonadaceae</taxon>
        <taxon>Pseudomonas</taxon>
    </lineage>
</organism>
<proteinExistence type="inferred from homology"/>
<comment type="function">
    <text evidence="1">O-methyltransferase that catalyzes the 2 O-methylation steps in the ubiquinone biosynthetic pathway.</text>
</comment>
<comment type="catalytic activity">
    <reaction evidence="1">
        <text>a 3-demethylubiquinol + S-adenosyl-L-methionine = a ubiquinol + S-adenosyl-L-homocysteine + H(+)</text>
        <dbReference type="Rhea" id="RHEA:44380"/>
        <dbReference type="Rhea" id="RHEA-COMP:9566"/>
        <dbReference type="Rhea" id="RHEA-COMP:10914"/>
        <dbReference type="ChEBI" id="CHEBI:15378"/>
        <dbReference type="ChEBI" id="CHEBI:17976"/>
        <dbReference type="ChEBI" id="CHEBI:57856"/>
        <dbReference type="ChEBI" id="CHEBI:59789"/>
        <dbReference type="ChEBI" id="CHEBI:84422"/>
        <dbReference type="EC" id="2.1.1.64"/>
    </reaction>
</comment>
<comment type="catalytic activity">
    <reaction evidence="1">
        <text>a 3-(all-trans-polyprenyl)benzene-1,2-diol + S-adenosyl-L-methionine = a 2-methoxy-6-(all-trans-polyprenyl)phenol + S-adenosyl-L-homocysteine + H(+)</text>
        <dbReference type="Rhea" id="RHEA:31411"/>
        <dbReference type="Rhea" id="RHEA-COMP:9550"/>
        <dbReference type="Rhea" id="RHEA-COMP:9551"/>
        <dbReference type="ChEBI" id="CHEBI:15378"/>
        <dbReference type="ChEBI" id="CHEBI:57856"/>
        <dbReference type="ChEBI" id="CHEBI:59789"/>
        <dbReference type="ChEBI" id="CHEBI:62729"/>
        <dbReference type="ChEBI" id="CHEBI:62731"/>
        <dbReference type="EC" id="2.1.1.222"/>
    </reaction>
</comment>
<comment type="pathway">
    <text evidence="1">Cofactor biosynthesis; ubiquinone biosynthesis.</text>
</comment>
<comment type="similarity">
    <text evidence="1">Belongs to the methyltransferase superfamily. UbiG/COQ3 family.</text>
</comment>
<name>UBIG_PSEPW</name>
<sequence length="232" mass="26038">MSNVDHAEIAKFEALAHRWWDRESEFKPLHDINPLRVNWIDERVSLAGKKVLDVGCGGGILSEAMALRGATVTGIDMGEAPLAVAQLHQLESGVEVEYRQITAEALAEEMPEQFDVITCLEMLEHVPDPSSVIRACYRMVKPGGQVFFSTINRNPKAYLLAIIGAEYILKMLPRGTHDFKKFIRPSELGAWSRVAGLEVKDIIGLTYNPLTKHYKLSSDVDVNYMIQTLREE</sequence>
<gene>
    <name evidence="1" type="primary">ubiG</name>
    <name type="ordered locus">PputW619_1372</name>
</gene>
<evidence type="ECO:0000255" key="1">
    <source>
        <dbReference type="HAMAP-Rule" id="MF_00472"/>
    </source>
</evidence>
<dbReference type="EC" id="2.1.1.222" evidence="1"/>
<dbReference type="EC" id="2.1.1.64" evidence="1"/>
<dbReference type="EMBL" id="CP000949">
    <property type="protein sequence ID" value="ACA71877.1"/>
    <property type="molecule type" value="Genomic_DNA"/>
</dbReference>
<dbReference type="SMR" id="B1J5G4"/>
<dbReference type="STRING" id="390235.PputW619_1372"/>
<dbReference type="KEGG" id="ppw:PputW619_1372"/>
<dbReference type="eggNOG" id="COG2227">
    <property type="taxonomic scope" value="Bacteria"/>
</dbReference>
<dbReference type="HOGENOM" id="CLU_042432_5_0_6"/>
<dbReference type="OrthoDB" id="9801538at2"/>
<dbReference type="UniPathway" id="UPA00232"/>
<dbReference type="GO" id="GO:0102208">
    <property type="term" value="F:2-polyprenyl-6-hydroxyphenol methylase activity"/>
    <property type="evidence" value="ECO:0007669"/>
    <property type="project" value="UniProtKB-EC"/>
</dbReference>
<dbReference type="GO" id="GO:0061542">
    <property type="term" value="F:3-demethylubiquinol 3-O-methyltransferase activity"/>
    <property type="evidence" value="ECO:0007669"/>
    <property type="project" value="UniProtKB-UniRule"/>
</dbReference>
<dbReference type="GO" id="GO:0010420">
    <property type="term" value="F:polyprenyldihydroxybenzoate methyltransferase activity"/>
    <property type="evidence" value="ECO:0007669"/>
    <property type="project" value="InterPro"/>
</dbReference>
<dbReference type="GO" id="GO:0032259">
    <property type="term" value="P:methylation"/>
    <property type="evidence" value="ECO:0007669"/>
    <property type="project" value="UniProtKB-KW"/>
</dbReference>
<dbReference type="CDD" id="cd02440">
    <property type="entry name" value="AdoMet_MTases"/>
    <property type="match status" value="1"/>
</dbReference>
<dbReference type="FunFam" id="3.40.50.150:FF:000028">
    <property type="entry name" value="Ubiquinone biosynthesis O-methyltransferase"/>
    <property type="match status" value="1"/>
</dbReference>
<dbReference type="Gene3D" id="3.40.50.150">
    <property type="entry name" value="Vaccinia Virus protein VP39"/>
    <property type="match status" value="1"/>
</dbReference>
<dbReference type="HAMAP" id="MF_00472">
    <property type="entry name" value="UbiG"/>
    <property type="match status" value="1"/>
</dbReference>
<dbReference type="InterPro" id="IPR029063">
    <property type="entry name" value="SAM-dependent_MTases_sf"/>
</dbReference>
<dbReference type="InterPro" id="IPR010233">
    <property type="entry name" value="UbiG_MeTrfase"/>
</dbReference>
<dbReference type="NCBIfam" id="TIGR01983">
    <property type="entry name" value="UbiG"/>
    <property type="match status" value="1"/>
</dbReference>
<dbReference type="PANTHER" id="PTHR43464">
    <property type="entry name" value="METHYLTRANSFERASE"/>
    <property type="match status" value="1"/>
</dbReference>
<dbReference type="PANTHER" id="PTHR43464:SF19">
    <property type="entry name" value="UBIQUINONE BIOSYNTHESIS O-METHYLTRANSFERASE, MITOCHONDRIAL"/>
    <property type="match status" value="1"/>
</dbReference>
<dbReference type="Pfam" id="PF13489">
    <property type="entry name" value="Methyltransf_23"/>
    <property type="match status" value="1"/>
</dbReference>
<dbReference type="SUPFAM" id="SSF53335">
    <property type="entry name" value="S-adenosyl-L-methionine-dependent methyltransferases"/>
    <property type="match status" value="1"/>
</dbReference>
<keyword id="KW-0489">Methyltransferase</keyword>
<keyword id="KW-0949">S-adenosyl-L-methionine</keyword>
<keyword id="KW-0808">Transferase</keyword>
<keyword id="KW-0831">Ubiquinone biosynthesis</keyword>
<reference key="1">
    <citation type="submission" date="2008-02" db="EMBL/GenBank/DDBJ databases">
        <title>Complete sequence of Pseudomonas putida W619.</title>
        <authorList>
            <person name="Copeland A."/>
            <person name="Lucas S."/>
            <person name="Lapidus A."/>
            <person name="Barry K."/>
            <person name="Detter J.C."/>
            <person name="Glavina del Rio T."/>
            <person name="Dalin E."/>
            <person name="Tice H."/>
            <person name="Pitluck S."/>
            <person name="Chain P."/>
            <person name="Malfatti S."/>
            <person name="Shin M."/>
            <person name="Vergez L."/>
            <person name="Schmutz J."/>
            <person name="Larimer F."/>
            <person name="Land M."/>
            <person name="Hauser L."/>
            <person name="Kyrpides N."/>
            <person name="Kim E."/>
            <person name="Taghavi S."/>
            <person name="Vangronsveld D."/>
            <person name="van der Lelie D."/>
            <person name="Richardson P."/>
        </authorList>
    </citation>
    <scope>NUCLEOTIDE SEQUENCE [LARGE SCALE GENOMIC DNA]</scope>
    <source>
        <strain>W619</strain>
    </source>
</reference>
<accession>B1J5G4</accession>